<evidence type="ECO:0000250" key="1">
    <source>
        <dbReference type="UniProtKB" id="P00415"/>
    </source>
</evidence>
<evidence type="ECO:0000250" key="2">
    <source>
        <dbReference type="UniProtKB" id="P00420"/>
    </source>
</evidence>
<evidence type="ECO:0000305" key="3"/>
<keyword id="KW-0472">Membrane</keyword>
<keyword id="KW-0496">Mitochondrion</keyword>
<keyword id="KW-0999">Mitochondrion inner membrane</keyword>
<keyword id="KW-1278">Translocase</keyword>
<keyword id="KW-0812">Transmembrane</keyword>
<keyword id="KW-1133">Transmembrane helix</keyword>
<reference key="1">
    <citation type="journal article" date="1997" name="Mol. Biol. Evol.">
        <title>Phylogenetic analyses of mitochondrial DNA suggest a sister group relationship between Xenarthra (Edentata) and Ferungulates.</title>
        <authorList>
            <person name="Arnason U."/>
            <person name="Gullberg A."/>
            <person name="Janke A."/>
        </authorList>
    </citation>
    <scope>NUCLEOTIDE SEQUENCE [GENOMIC DNA]</scope>
</reference>
<geneLocation type="mitochondrion"/>
<gene>
    <name type="primary">MT-CO3</name>
    <name type="synonym">COIII</name>
    <name type="synonym">COXIII</name>
    <name type="synonym">MTCO3</name>
</gene>
<sequence>MTHQTHAYHTVNPSPWPLTGALSALLMTSGLIMWFHFNSPLLLVLGLTTNFLTMYQWWRDIIRESTFQGHHTTIVQKGLRYGMILFIVSEVFFFAGFFWAFYHSSLAPTPELGGCWPPTGINPLNPLEVPLLNTSVLLASGVSITWAHHSLMEGHRKHMLQALFITIALGVYFTLLQASEYYEAPFTISDGIYGSTFFVATGFHGLHVIIGSSFLIVCFMRQLKFHFTSSHHFGFEAAAWYWHFVDVVWLFLYVSIYWWGS</sequence>
<name>COX3_DASNO</name>
<feature type="chain" id="PRO_0000183764" description="Cytochrome c oxidase subunit 3">
    <location>
        <begin position="1"/>
        <end position="261"/>
    </location>
</feature>
<feature type="topological domain" description="Mitochondrial matrix" evidence="1">
    <location>
        <begin position="1"/>
        <end position="15"/>
    </location>
</feature>
<feature type="transmembrane region" description="Helical; Name=I" evidence="1">
    <location>
        <begin position="16"/>
        <end position="34"/>
    </location>
</feature>
<feature type="topological domain" description="Mitochondrial intermembrane" evidence="1">
    <location>
        <begin position="35"/>
        <end position="40"/>
    </location>
</feature>
<feature type="transmembrane region" description="Helical; Name=II" evidence="1">
    <location>
        <begin position="41"/>
        <end position="66"/>
    </location>
</feature>
<feature type="topological domain" description="Mitochondrial matrix" evidence="1">
    <location>
        <begin position="67"/>
        <end position="72"/>
    </location>
</feature>
<feature type="transmembrane region" description="Helical; Name=III" evidence="1">
    <location>
        <begin position="73"/>
        <end position="105"/>
    </location>
</feature>
<feature type="topological domain" description="Mitochondrial intermembrane" evidence="1">
    <location>
        <begin position="106"/>
        <end position="128"/>
    </location>
</feature>
<feature type="transmembrane region" description="Helical; Name=IV" evidence="1">
    <location>
        <begin position="129"/>
        <end position="152"/>
    </location>
</feature>
<feature type="topological domain" description="Mitochondrial matrix" evidence="1">
    <location>
        <begin position="153"/>
        <end position="155"/>
    </location>
</feature>
<feature type="transmembrane region" description="Helical; Name=V" evidence="1">
    <location>
        <begin position="156"/>
        <end position="183"/>
    </location>
</feature>
<feature type="topological domain" description="Mitochondrial intermembrane" evidence="1">
    <location>
        <begin position="184"/>
        <end position="190"/>
    </location>
</feature>
<feature type="transmembrane region" description="Helical; Name=VI" evidence="1">
    <location>
        <begin position="191"/>
        <end position="223"/>
    </location>
</feature>
<feature type="topological domain" description="Mitochondrial matrix" evidence="1">
    <location>
        <begin position="224"/>
        <end position="232"/>
    </location>
</feature>
<feature type="transmembrane region" description="Helical; Name=VII" evidence="1">
    <location>
        <begin position="233"/>
        <end position="256"/>
    </location>
</feature>
<feature type="topological domain" description="Mitochondrial intermembrane" evidence="1">
    <location>
        <begin position="257"/>
        <end position="261"/>
    </location>
</feature>
<dbReference type="EC" id="7.1.1.9"/>
<dbReference type="EMBL" id="Y11832">
    <property type="protein sequence ID" value="CAA72522.1"/>
    <property type="molecule type" value="Genomic_DNA"/>
</dbReference>
<dbReference type="PIR" id="T11447">
    <property type="entry name" value="T11447"/>
</dbReference>
<dbReference type="RefSeq" id="NP_007465.1">
    <property type="nucleotide sequence ID" value="NC_001821.1"/>
</dbReference>
<dbReference type="SMR" id="O21331"/>
<dbReference type="GeneID" id="808131"/>
<dbReference type="KEGG" id="dnm:808131"/>
<dbReference type="CTD" id="4514"/>
<dbReference type="HOGENOM" id="CLU_044071_0_0_1"/>
<dbReference type="OMA" id="SIYWWGS"/>
<dbReference type="GO" id="GO:0005743">
    <property type="term" value="C:mitochondrial inner membrane"/>
    <property type="evidence" value="ECO:0007669"/>
    <property type="project" value="UniProtKB-SubCell"/>
</dbReference>
<dbReference type="GO" id="GO:0045277">
    <property type="term" value="C:respiratory chain complex IV"/>
    <property type="evidence" value="ECO:0000250"/>
    <property type="project" value="UniProtKB"/>
</dbReference>
<dbReference type="GO" id="GO:0004129">
    <property type="term" value="F:cytochrome-c oxidase activity"/>
    <property type="evidence" value="ECO:0007669"/>
    <property type="project" value="UniProtKB-EC"/>
</dbReference>
<dbReference type="GO" id="GO:0006123">
    <property type="term" value="P:mitochondrial electron transport, cytochrome c to oxygen"/>
    <property type="evidence" value="ECO:0007669"/>
    <property type="project" value="TreeGrafter"/>
</dbReference>
<dbReference type="GO" id="GO:0008535">
    <property type="term" value="P:respiratory chain complex IV assembly"/>
    <property type="evidence" value="ECO:0000250"/>
    <property type="project" value="UniProtKB"/>
</dbReference>
<dbReference type="CDD" id="cd01665">
    <property type="entry name" value="Cyt_c_Oxidase_III"/>
    <property type="match status" value="1"/>
</dbReference>
<dbReference type="FunFam" id="1.10.287.70:FF:000048">
    <property type="entry name" value="Cytochrome c oxidase subunit 3"/>
    <property type="match status" value="1"/>
</dbReference>
<dbReference type="FunFam" id="1.20.120.80:FF:000002">
    <property type="entry name" value="Cytochrome c oxidase subunit 3"/>
    <property type="match status" value="1"/>
</dbReference>
<dbReference type="Gene3D" id="1.10.287.70">
    <property type="match status" value="1"/>
</dbReference>
<dbReference type="Gene3D" id="1.20.120.80">
    <property type="entry name" value="Cytochrome c oxidase, subunit III, four-helix bundle"/>
    <property type="match status" value="1"/>
</dbReference>
<dbReference type="InterPro" id="IPR024791">
    <property type="entry name" value="Cyt_c/ubiquinol_Oxase_su3"/>
</dbReference>
<dbReference type="InterPro" id="IPR033945">
    <property type="entry name" value="Cyt_c_oxase_su3_dom"/>
</dbReference>
<dbReference type="InterPro" id="IPR000298">
    <property type="entry name" value="Cyt_c_oxidase-like_su3"/>
</dbReference>
<dbReference type="InterPro" id="IPR035973">
    <property type="entry name" value="Cyt_c_oxidase_su3-like_sf"/>
</dbReference>
<dbReference type="InterPro" id="IPR013833">
    <property type="entry name" value="Cyt_c_oxidase_su3_a-hlx"/>
</dbReference>
<dbReference type="PANTHER" id="PTHR11403:SF7">
    <property type="entry name" value="CYTOCHROME C OXIDASE SUBUNIT 3"/>
    <property type="match status" value="1"/>
</dbReference>
<dbReference type="PANTHER" id="PTHR11403">
    <property type="entry name" value="CYTOCHROME C OXIDASE SUBUNIT III"/>
    <property type="match status" value="1"/>
</dbReference>
<dbReference type="Pfam" id="PF00510">
    <property type="entry name" value="COX3"/>
    <property type="match status" value="1"/>
</dbReference>
<dbReference type="SUPFAM" id="SSF81452">
    <property type="entry name" value="Cytochrome c oxidase subunit III-like"/>
    <property type="match status" value="1"/>
</dbReference>
<dbReference type="PROSITE" id="PS50253">
    <property type="entry name" value="COX3"/>
    <property type="match status" value="1"/>
</dbReference>
<proteinExistence type="inferred from homology"/>
<accession>O21331</accession>
<comment type="function">
    <text evidence="2">Component of the cytochrome c oxidase, the last enzyme in the mitochondrial electron transport chain which drives oxidative phosphorylation. The respiratory chain contains 3 multisubunit complexes succinate dehydrogenase (complex II, CII), ubiquinol-cytochrome c oxidoreductase (cytochrome b-c1 complex, complex III, CIII) and cytochrome c oxidase (complex IV, CIV), that cooperate to transfer electrons derived from NADH and succinate to molecular oxygen, creating an electrochemical gradient over the inner membrane that drives transmembrane transport and the ATP synthase. Cytochrome c oxidase is the component of the respiratory chain that catalyzes the reduction of oxygen to water. Electrons originating from reduced cytochrome c in the intermembrane space (IMS) are transferred via the dinuclear copper A center (CU(A)) of subunit 2 and heme A of subunit 1 to the active site in subunit 1, a binuclear center (BNC) formed by heme A3 and copper B (CU(B)). The BNC reduces molecular oxygen to 2 water molecules using 4 electrons from cytochrome c in the IMS and 4 protons from the mitochondrial matrix.</text>
</comment>
<comment type="catalytic activity">
    <reaction evidence="2">
        <text>4 Fe(II)-[cytochrome c] + O2 + 8 H(+)(in) = 4 Fe(III)-[cytochrome c] + 2 H2O + 4 H(+)(out)</text>
        <dbReference type="Rhea" id="RHEA:11436"/>
        <dbReference type="Rhea" id="RHEA-COMP:10350"/>
        <dbReference type="Rhea" id="RHEA-COMP:14399"/>
        <dbReference type="ChEBI" id="CHEBI:15377"/>
        <dbReference type="ChEBI" id="CHEBI:15378"/>
        <dbReference type="ChEBI" id="CHEBI:15379"/>
        <dbReference type="ChEBI" id="CHEBI:29033"/>
        <dbReference type="ChEBI" id="CHEBI:29034"/>
        <dbReference type="EC" id="7.1.1.9"/>
    </reaction>
    <physiologicalReaction direction="left-to-right" evidence="2">
        <dbReference type="Rhea" id="RHEA:11437"/>
    </physiologicalReaction>
</comment>
<comment type="subunit">
    <text evidence="1">Component of the cytochrome c oxidase (complex IV, CIV), a multisubunit enzyme composed of 14 subunits. The complex is composed of a catalytic core of 3 subunits MT-CO1, MT-CO2 and MT-CO3, encoded in the mitochondrial DNA, and 11 supernumerary subunits COX4I, COX5A, COX5B, COX6A, COX6B, COX6C, COX7A, COX7B, COX7C, COX8 and NDUFA4, which are encoded in the nuclear genome. The complex exists as a monomer or a dimer and forms supercomplexes (SCs) in the inner mitochondrial membrane with NADH-ubiquinone oxidoreductase (complex I, CI) and ubiquinol-cytochrome c oxidoreductase (cytochrome b-c1 complex, complex III, CIII), resulting in different assemblies (supercomplex SCI(1)III(2)IV(1) and megacomplex MCI(2)III(2)IV(2)).</text>
</comment>
<comment type="subcellular location">
    <subcellularLocation>
        <location evidence="1">Mitochondrion inner membrane</location>
        <topology evidence="1">Multi-pass membrane protein</topology>
    </subcellularLocation>
</comment>
<comment type="similarity">
    <text evidence="3">Belongs to the cytochrome c oxidase subunit 3 family.</text>
</comment>
<organism>
    <name type="scientific">Dasypus novemcinctus</name>
    <name type="common">Nine-banded armadillo</name>
    <dbReference type="NCBI Taxonomy" id="9361"/>
    <lineage>
        <taxon>Eukaryota</taxon>
        <taxon>Metazoa</taxon>
        <taxon>Chordata</taxon>
        <taxon>Craniata</taxon>
        <taxon>Vertebrata</taxon>
        <taxon>Euteleostomi</taxon>
        <taxon>Mammalia</taxon>
        <taxon>Eutheria</taxon>
        <taxon>Xenarthra</taxon>
        <taxon>Cingulata</taxon>
        <taxon>Dasypodidae</taxon>
        <taxon>Dasypus</taxon>
    </lineage>
</organism>
<protein>
    <recommendedName>
        <fullName>Cytochrome c oxidase subunit 3</fullName>
        <ecNumber>7.1.1.9</ecNumber>
    </recommendedName>
    <alternativeName>
        <fullName>Cytochrome c oxidase polypeptide III</fullName>
    </alternativeName>
</protein>